<name>MUCA_PSEAE</name>
<organism>
    <name type="scientific">Pseudomonas aeruginosa (strain ATCC 15692 / DSM 22644 / CIP 104116 / JCM 14847 / LMG 12228 / 1C / PRS 101 / PAO1)</name>
    <dbReference type="NCBI Taxonomy" id="208964"/>
    <lineage>
        <taxon>Bacteria</taxon>
        <taxon>Pseudomonadati</taxon>
        <taxon>Pseudomonadota</taxon>
        <taxon>Gammaproteobacteria</taxon>
        <taxon>Pseudomonadales</taxon>
        <taxon>Pseudomonadaceae</taxon>
        <taxon>Pseudomonas</taxon>
    </lineage>
</organism>
<reference key="1">
    <citation type="journal article" date="1993" name="Mol. Microbiol.">
        <title>Differentiation of Pseudomonas aeruginosa into the alginate-producing form: inactivation of mucB causes conversion to mucoidy.</title>
        <authorList>
            <person name="Martin D.W."/>
            <person name="Schurr M.J."/>
            <person name="Mudd M.H."/>
            <person name="Deretic V."/>
        </authorList>
    </citation>
    <scope>NUCLEOTIDE SEQUENCE [GENOMIC DNA]</scope>
    <source>
        <strain>ATCC 15692 / DSM 22644 / CIP 104116 / JCM 14847 / LMG 12228 / 1C / PRS 101 / PAO1</strain>
    </source>
</reference>
<reference key="2">
    <citation type="journal article" date="1993" name="Proc. Natl. Acad. Sci. U.S.A.">
        <title>Mechanism of conversion to mucoidy in Pseudomonas aeruginosa infecting cystic fibrosis patients.</title>
        <authorList>
            <person name="Martin D.W."/>
            <person name="Schurr M.J."/>
            <person name="Mudd M.H."/>
            <person name="Govan J.R.W."/>
            <person name="Holloway B.W."/>
            <person name="Deretic V."/>
        </authorList>
    </citation>
    <scope>NUCLEOTIDE SEQUENCE [GENOMIC DNA]</scope>
    <source>
        <strain>PAO381</strain>
        <strain>PAO568</strain>
    </source>
</reference>
<reference key="3">
    <citation type="journal article" date="2000" name="Nature">
        <title>Complete genome sequence of Pseudomonas aeruginosa PAO1, an opportunistic pathogen.</title>
        <authorList>
            <person name="Stover C.K."/>
            <person name="Pham X.-Q.T."/>
            <person name="Erwin A.L."/>
            <person name="Mizoguchi S.D."/>
            <person name="Warrener P."/>
            <person name="Hickey M.J."/>
            <person name="Brinkman F.S.L."/>
            <person name="Hufnagle W.O."/>
            <person name="Kowalik D.J."/>
            <person name="Lagrou M."/>
            <person name="Garber R.L."/>
            <person name="Goltry L."/>
            <person name="Tolentino E."/>
            <person name="Westbrock-Wadman S."/>
            <person name="Yuan Y."/>
            <person name="Brody L.L."/>
            <person name="Coulter S.N."/>
            <person name="Folger K.R."/>
            <person name="Kas A."/>
            <person name="Larbig K."/>
            <person name="Lim R.M."/>
            <person name="Smith K.A."/>
            <person name="Spencer D.H."/>
            <person name="Wong G.K.-S."/>
            <person name="Wu Z."/>
            <person name="Paulsen I.T."/>
            <person name="Reizer J."/>
            <person name="Saier M.H. Jr."/>
            <person name="Hancock R.E.W."/>
            <person name="Lory S."/>
            <person name="Olson M.V."/>
        </authorList>
    </citation>
    <scope>NUCLEOTIDE SEQUENCE [LARGE SCALE GENOMIC DNA]</scope>
    <source>
        <strain>ATCC 15692 / DSM 22644 / CIP 104116 / JCM 14847 / LMG 12228 / 1C / PRS 101 / PAO1</strain>
    </source>
</reference>
<dbReference type="EMBL" id="L14760">
    <property type="protein sequence ID" value="AAA87629.1"/>
    <property type="molecule type" value="Genomic_DNA"/>
</dbReference>
<dbReference type="EMBL" id="U49151">
    <property type="protein sequence ID" value="AAC43715.1"/>
    <property type="molecule type" value="Genomic_DNA"/>
</dbReference>
<dbReference type="EMBL" id="AE004091">
    <property type="protein sequence ID" value="AAG04152.1"/>
    <property type="molecule type" value="Genomic_DNA"/>
</dbReference>
<dbReference type="PIR" id="S36207">
    <property type="entry name" value="S36207"/>
</dbReference>
<dbReference type="RefSeq" id="NP_249454.1">
    <property type="nucleotide sequence ID" value="NC_002516.2"/>
</dbReference>
<dbReference type="RefSeq" id="WP_003101958.1">
    <property type="nucleotide sequence ID" value="NZ_QZGE01000007.1"/>
</dbReference>
<dbReference type="PDB" id="6IN7">
    <property type="method" value="X-ray"/>
    <property type="resolution" value="1.96 A"/>
    <property type="chains" value="A=1-80"/>
</dbReference>
<dbReference type="PDB" id="6IN9">
    <property type="method" value="X-ray"/>
    <property type="resolution" value="1.80 A"/>
    <property type="chains" value="C/D=106-194"/>
</dbReference>
<dbReference type="PDB" id="6JAU">
    <property type="method" value="X-ray"/>
    <property type="resolution" value="1.91 A"/>
    <property type="chains" value="B=106-194"/>
</dbReference>
<dbReference type="PDB" id="8Z6G">
    <property type="method" value="X-ray"/>
    <property type="resolution" value="2.10 A"/>
    <property type="chains" value="A/C/E=1-80"/>
</dbReference>
<dbReference type="PDBsum" id="6IN7"/>
<dbReference type="PDBsum" id="6IN9"/>
<dbReference type="PDBsum" id="6JAU"/>
<dbReference type="PDBsum" id="8Z6G"/>
<dbReference type="SMR" id="P38107"/>
<dbReference type="FunCoup" id="P38107">
    <property type="interactions" value="40"/>
</dbReference>
<dbReference type="IntAct" id="P38107">
    <property type="interactions" value="3"/>
</dbReference>
<dbReference type="STRING" id="208964.PA0763"/>
<dbReference type="PaxDb" id="208964-PA0763"/>
<dbReference type="GeneID" id="879357"/>
<dbReference type="KEGG" id="pae:PA0763"/>
<dbReference type="PATRIC" id="fig|208964.12.peg.793"/>
<dbReference type="PseudoCAP" id="PA0763"/>
<dbReference type="HOGENOM" id="CLU_105872_1_0_6"/>
<dbReference type="InParanoid" id="P38107"/>
<dbReference type="OrthoDB" id="5734981at2"/>
<dbReference type="PhylomeDB" id="P38107"/>
<dbReference type="BioCyc" id="PAER208964:G1FZ6-776-MONOMER"/>
<dbReference type="Proteomes" id="UP000002438">
    <property type="component" value="Chromosome"/>
</dbReference>
<dbReference type="GO" id="GO:0005886">
    <property type="term" value="C:plasma membrane"/>
    <property type="evidence" value="ECO:0007669"/>
    <property type="project" value="UniProtKB-SubCell"/>
</dbReference>
<dbReference type="GO" id="GO:0016989">
    <property type="term" value="F:sigma factor antagonist activity"/>
    <property type="evidence" value="ECO:0000315"/>
    <property type="project" value="PseudoCAP"/>
</dbReference>
<dbReference type="GO" id="GO:0042121">
    <property type="term" value="P:alginic acid biosynthetic process"/>
    <property type="evidence" value="ECO:0007669"/>
    <property type="project" value="UniProtKB-KW"/>
</dbReference>
<dbReference type="GO" id="GO:0032885">
    <property type="term" value="P:regulation of polysaccharide biosynthetic process"/>
    <property type="evidence" value="ECO:0000315"/>
    <property type="project" value="PseudoCAP"/>
</dbReference>
<dbReference type="CDD" id="cd16328">
    <property type="entry name" value="RseA_N"/>
    <property type="match status" value="1"/>
</dbReference>
<dbReference type="FunFam" id="1.10.10.880:FF:000002">
    <property type="entry name" value="Sigma factor AlgU regulatory protein MucA"/>
    <property type="match status" value="1"/>
</dbReference>
<dbReference type="Gene3D" id="1.10.10.880">
    <property type="entry name" value="Anti sigma-E protein RseA, N-terminal domain"/>
    <property type="match status" value="1"/>
</dbReference>
<dbReference type="InterPro" id="IPR052383">
    <property type="entry name" value="Anti-sigma-E_RseA-like"/>
</dbReference>
<dbReference type="InterPro" id="IPR005573">
    <property type="entry name" value="Anti-sigma_E_RseA_C"/>
</dbReference>
<dbReference type="InterPro" id="IPR005572">
    <property type="entry name" value="Anti-sigma_E_RseA_N"/>
</dbReference>
<dbReference type="InterPro" id="IPR036147">
    <property type="entry name" value="Anti-sigma_E_RseA_N_sf"/>
</dbReference>
<dbReference type="PANTHER" id="PTHR38104">
    <property type="match status" value="1"/>
</dbReference>
<dbReference type="PANTHER" id="PTHR38104:SF1">
    <property type="entry name" value="ANTI-SIGMA-E FACTOR RSEA"/>
    <property type="match status" value="1"/>
</dbReference>
<dbReference type="Pfam" id="PF03873">
    <property type="entry name" value="RseA_C"/>
    <property type="match status" value="1"/>
</dbReference>
<dbReference type="Pfam" id="PF03872">
    <property type="entry name" value="RseA_N"/>
    <property type="match status" value="1"/>
</dbReference>
<dbReference type="SUPFAM" id="SSF89069">
    <property type="entry name" value="N-terminal, cytoplasmic domain of anti-sigmaE factor RseA"/>
    <property type="match status" value="1"/>
</dbReference>
<gene>
    <name type="primary">mucA</name>
    <name type="ordered locus">PA0763</name>
</gene>
<comment type="function">
    <text>Negative regulator of the sigma factor AlgU. Plays a role in the differentiation of P.aeruginosa into the alginate-producing form. Inactivation of mucA causes a switch from the non-mucoid to mucoid state resulting in constitutive expression of alginate biosynthetic genes.</text>
</comment>
<comment type="interaction">
    <interactant intactId="EBI-6406981">
        <id>P38107</id>
    </interactant>
    <interactant intactId="EBI-6407097">
        <id>Q9HVX1</id>
        <label>algW</label>
    </interactant>
    <organismsDiffer>false</organismsDiffer>
    <experiments>3</experiments>
</comment>
<comment type="interaction">
    <interactant intactId="EBI-6406981">
        <id>P38107</id>
    </interactant>
    <interactant intactId="EBI-6406975">
        <id>P38108</id>
        <label>mucB</label>
    </interactant>
    <organismsDiffer>false</organismsDiffer>
    <experiments>4</experiments>
</comment>
<comment type="subcellular location">
    <subcellularLocation>
        <location evidence="2">Cell membrane</location>
        <topology evidence="2">Single-pass membrane protein</topology>
    </subcellularLocation>
</comment>
<comment type="similarity">
    <text evidence="2">Belongs to the RseA family.</text>
</comment>
<evidence type="ECO:0000255" key="1"/>
<evidence type="ECO:0000305" key="2"/>
<evidence type="ECO:0007829" key="3">
    <source>
        <dbReference type="PDB" id="6IN7"/>
    </source>
</evidence>
<evidence type="ECO:0007829" key="4">
    <source>
        <dbReference type="PDB" id="6IN9"/>
    </source>
</evidence>
<accession>P38107</accession>
<sequence length="194" mass="20999">MSREALQETLSAVMDNEADELELRRVLAACGEDAELRSTWSRYQLARSVMHREPTLPKLDIAAAVSAALADEAAPPKAEKGPWRMVGRLAVAASVTLAVLAGVRLYNQNDALPQMAQQGTTPQIALPQVKGPAVLAGYSEEQGAPQVITNSSSSDTRWHEQRLPIYLRQHVQQSAVSGTESALPYARAASLENR</sequence>
<feature type="chain" id="PRO_0000096642" description="Sigma factor AlgU negative regulatory protein">
    <location>
        <begin position="1"/>
        <end position="194"/>
    </location>
</feature>
<feature type="transmembrane region" description="Helical" evidence="1">
    <location>
        <begin position="89"/>
        <end position="105"/>
    </location>
</feature>
<feature type="helix" evidence="3">
    <location>
        <begin position="3"/>
        <end position="14"/>
    </location>
</feature>
<feature type="helix" evidence="3">
    <location>
        <begin position="20"/>
        <end position="32"/>
    </location>
</feature>
<feature type="helix" evidence="3">
    <location>
        <begin position="34"/>
        <end position="50"/>
    </location>
</feature>
<feature type="helix" evidence="3">
    <location>
        <begin position="62"/>
        <end position="70"/>
    </location>
</feature>
<feature type="helix" evidence="4">
    <location>
        <begin position="153"/>
        <end position="160"/>
    </location>
</feature>
<feature type="helix" evidence="4">
    <location>
        <begin position="163"/>
        <end position="177"/>
    </location>
</feature>
<feature type="helix" evidence="4">
    <location>
        <begin position="183"/>
        <end position="189"/>
    </location>
</feature>
<keyword id="KW-0002">3D-structure</keyword>
<keyword id="KW-0016">Alginate biosynthesis</keyword>
<keyword id="KW-1003">Cell membrane</keyword>
<keyword id="KW-0472">Membrane</keyword>
<keyword id="KW-1185">Reference proteome</keyword>
<keyword id="KW-0812">Transmembrane</keyword>
<keyword id="KW-1133">Transmembrane helix</keyword>
<protein>
    <recommendedName>
        <fullName>Sigma factor AlgU negative regulatory protein</fullName>
    </recommendedName>
</protein>
<proteinExistence type="evidence at protein level"/>